<comment type="catalytic activity">
    <reaction evidence="1">
        <text>(6S)-5,6,7,8-tetrahydrofolate + formate + ATP = (6R)-10-formyltetrahydrofolate + ADP + phosphate</text>
        <dbReference type="Rhea" id="RHEA:20221"/>
        <dbReference type="ChEBI" id="CHEBI:15740"/>
        <dbReference type="ChEBI" id="CHEBI:30616"/>
        <dbReference type="ChEBI" id="CHEBI:43474"/>
        <dbReference type="ChEBI" id="CHEBI:57453"/>
        <dbReference type="ChEBI" id="CHEBI:195366"/>
        <dbReference type="ChEBI" id="CHEBI:456216"/>
        <dbReference type="EC" id="6.3.4.3"/>
    </reaction>
</comment>
<comment type="pathway">
    <text evidence="1">One-carbon metabolism; tetrahydrofolate interconversion.</text>
</comment>
<comment type="similarity">
    <text evidence="1">Belongs to the formate--tetrahydrofolate ligase family.</text>
</comment>
<organism>
    <name type="scientific">Staphylococcus aureus (strain NCTC 8325 / PS 47)</name>
    <dbReference type="NCBI Taxonomy" id="93061"/>
    <lineage>
        <taxon>Bacteria</taxon>
        <taxon>Bacillati</taxon>
        <taxon>Bacillota</taxon>
        <taxon>Bacilli</taxon>
        <taxon>Bacillales</taxon>
        <taxon>Staphylococcaceae</taxon>
        <taxon>Staphylococcus</taxon>
    </lineage>
</organism>
<feature type="chain" id="PRO_0000300544" description="Formate--tetrahydrofolate ligase">
    <location>
        <begin position="1"/>
        <end position="555"/>
    </location>
</feature>
<feature type="binding site" evidence="1">
    <location>
        <begin position="65"/>
        <end position="72"/>
    </location>
    <ligand>
        <name>ATP</name>
        <dbReference type="ChEBI" id="CHEBI:30616"/>
    </ligand>
</feature>
<accession>Q2G296</accession>
<keyword id="KW-0067">ATP-binding</keyword>
<keyword id="KW-0436">Ligase</keyword>
<keyword id="KW-0547">Nucleotide-binding</keyword>
<keyword id="KW-0554">One-carbon metabolism</keyword>
<keyword id="KW-1185">Reference proteome</keyword>
<dbReference type="EC" id="6.3.4.3" evidence="1"/>
<dbReference type="EMBL" id="CP000253">
    <property type="protein sequence ID" value="ABD30912.1"/>
    <property type="molecule type" value="Genomic_DNA"/>
</dbReference>
<dbReference type="RefSeq" id="WP_000149403.1">
    <property type="nucleotide sequence ID" value="NZ_LS483365.1"/>
</dbReference>
<dbReference type="RefSeq" id="YP_500350.1">
    <property type="nucleotide sequence ID" value="NC_007795.1"/>
</dbReference>
<dbReference type="SMR" id="Q2G296"/>
<dbReference type="STRING" id="93061.SAOUHSC_01845"/>
<dbReference type="PaxDb" id="1280-SAXN108_1761"/>
<dbReference type="GeneID" id="3920524"/>
<dbReference type="KEGG" id="sao:SAOUHSC_01845"/>
<dbReference type="PATRIC" id="fig|93061.5.peg.1681"/>
<dbReference type="eggNOG" id="COG2759">
    <property type="taxonomic scope" value="Bacteria"/>
</dbReference>
<dbReference type="HOGENOM" id="CLU_003601_3_3_9"/>
<dbReference type="OrthoDB" id="9761733at2"/>
<dbReference type="UniPathway" id="UPA00193"/>
<dbReference type="PRO" id="PR:Q2G296"/>
<dbReference type="Proteomes" id="UP000008816">
    <property type="component" value="Chromosome"/>
</dbReference>
<dbReference type="GO" id="GO:0005524">
    <property type="term" value="F:ATP binding"/>
    <property type="evidence" value="ECO:0007669"/>
    <property type="project" value="UniProtKB-UniRule"/>
</dbReference>
<dbReference type="GO" id="GO:0004329">
    <property type="term" value="F:formate-tetrahydrofolate ligase activity"/>
    <property type="evidence" value="ECO:0007669"/>
    <property type="project" value="UniProtKB-UniRule"/>
</dbReference>
<dbReference type="GO" id="GO:0035999">
    <property type="term" value="P:tetrahydrofolate interconversion"/>
    <property type="evidence" value="ECO:0007669"/>
    <property type="project" value="UniProtKB-UniRule"/>
</dbReference>
<dbReference type="CDD" id="cd00477">
    <property type="entry name" value="FTHFS"/>
    <property type="match status" value="1"/>
</dbReference>
<dbReference type="FunFam" id="3.30.1510.10:FF:000001">
    <property type="entry name" value="Formate--tetrahydrofolate ligase"/>
    <property type="match status" value="1"/>
</dbReference>
<dbReference type="FunFam" id="3.10.410.10:FF:000001">
    <property type="entry name" value="Putative formate--tetrahydrofolate ligase"/>
    <property type="match status" value="1"/>
</dbReference>
<dbReference type="Gene3D" id="3.30.1510.10">
    <property type="entry name" value="Domain 2, N(10)-formyltetrahydrofolate synthetase"/>
    <property type="match status" value="1"/>
</dbReference>
<dbReference type="Gene3D" id="3.10.410.10">
    <property type="entry name" value="Formyltetrahydrofolate synthetase, domain 3"/>
    <property type="match status" value="1"/>
</dbReference>
<dbReference type="Gene3D" id="3.40.50.300">
    <property type="entry name" value="P-loop containing nucleotide triphosphate hydrolases"/>
    <property type="match status" value="1"/>
</dbReference>
<dbReference type="HAMAP" id="MF_01543">
    <property type="entry name" value="FTHFS"/>
    <property type="match status" value="1"/>
</dbReference>
<dbReference type="InterPro" id="IPR000559">
    <property type="entry name" value="Formate_THF_ligase"/>
</dbReference>
<dbReference type="InterPro" id="IPR020628">
    <property type="entry name" value="Formate_THF_ligase_CS"/>
</dbReference>
<dbReference type="InterPro" id="IPR027417">
    <property type="entry name" value="P-loop_NTPase"/>
</dbReference>
<dbReference type="NCBIfam" id="NF010030">
    <property type="entry name" value="PRK13505.1"/>
    <property type="match status" value="1"/>
</dbReference>
<dbReference type="Pfam" id="PF01268">
    <property type="entry name" value="FTHFS"/>
    <property type="match status" value="1"/>
</dbReference>
<dbReference type="SUPFAM" id="SSF52540">
    <property type="entry name" value="P-loop containing nucleoside triphosphate hydrolases"/>
    <property type="match status" value="1"/>
</dbReference>
<dbReference type="PROSITE" id="PS00721">
    <property type="entry name" value="FTHFS_1"/>
    <property type="match status" value="1"/>
</dbReference>
<dbReference type="PROSITE" id="PS00722">
    <property type="entry name" value="FTHFS_2"/>
    <property type="match status" value="1"/>
</dbReference>
<reference key="1">
    <citation type="book" date="2006" name="Gram positive pathogens, 2nd edition">
        <title>The Staphylococcus aureus NCTC 8325 genome.</title>
        <editorList>
            <person name="Fischetti V."/>
            <person name="Novick R."/>
            <person name="Ferretti J."/>
            <person name="Portnoy D."/>
            <person name="Rood J."/>
        </editorList>
        <authorList>
            <person name="Gillaspy A.F."/>
            <person name="Worrell V."/>
            <person name="Orvis J."/>
            <person name="Roe B.A."/>
            <person name="Dyer D.W."/>
            <person name="Iandolo J.J."/>
        </authorList>
    </citation>
    <scope>NUCLEOTIDE SEQUENCE [LARGE SCALE GENOMIC DNA]</scope>
    <source>
        <strain>NCTC 8325 / PS 47</strain>
    </source>
</reference>
<proteinExistence type="inferred from homology"/>
<name>FTHS_STAA8</name>
<protein>
    <recommendedName>
        <fullName evidence="1">Formate--tetrahydrofolate ligase</fullName>
        <ecNumber evidence="1">6.3.4.3</ecNumber>
    </recommendedName>
    <alternativeName>
        <fullName evidence="1">Formyltetrahydrofolate synthetase</fullName>
        <shortName evidence="1">FHS</shortName>
        <shortName evidence="1">FTHFS</shortName>
    </alternativeName>
</protein>
<gene>
    <name evidence="1" type="primary">fhs</name>
    <name type="ordered locus">SAOUHSC_01845</name>
</gene>
<sequence length="555" mass="59856">MTHLSDLDIANQSTLQPIKDIAASVGISEDALEPYGHYKAKIDINKITPRENKGKVVLVTAMSPTPAGEGKSTVTVGLADAFHELNKNVMVALREPALGPTFGIKGGATGGGYAQVLPMEDINLHFNGDFHAITTANNALSAFIDNHIHQGNELGIDQRRIEWKRVLDMNDRALRHVNVGLGGPTNGVPREDGFNITVASEIMAILCLSRSIKDLKDKISRITIGYTRDRKPVTVADLKVEGALAMILKDAIKPNLVQSIEGTPALVHGGPFANIAHGCNSILATETARDLADIVVTEAGFGSDLGAEKFMDIKAREAGFDPAAVVVVATIRALKMHGGVAKDNLKEENVEAVKAGIVNLERHVNNIKKFGVEPVVAINAFIHDTDAEVEYVKSWAKENNVRIALTEVWEKGGKGGVDLANEVLEVIDQPNSFKPLYELELPLEQKIEKIVTEIYGGSKVTFSSKAQKQLKQFKENGWDNYPVCMAKTQYSFSDDQTLLGAPSGFEITIRELEAKTGAGFIVALTGAIMTMPGLPKKPAALNMDVTDDGHAIGLF</sequence>
<evidence type="ECO:0000255" key="1">
    <source>
        <dbReference type="HAMAP-Rule" id="MF_01543"/>
    </source>
</evidence>